<name>MIAB_PROM2</name>
<dbReference type="EC" id="2.8.4.3" evidence="1"/>
<dbReference type="EMBL" id="CP000825">
    <property type="protein sequence ID" value="ABV51147.1"/>
    <property type="molecule type" value="Genomic_DNA"/>
</dbReference>
<dbReference type="RefSeq" id="WP_012008194.1">
    <property type="nucleotide sequence ID" value="NC_009840.1"/>
</dbReference>
<dbReference type="SMR" id="A8G6B6"/>
<dbReference type="STRING" id="93060.P9215_15341"/>
<dbReference type="KEGG" id="pmh:P9215_15341"/>
<dbReference type="eggNOG" id="COG0621">
    <property type="taxonomic scope" value="Bacteria"/>
</dbReference>
<dbReference type="HOGENOM" id="CLU_018697_2_2_3"/>
<dbReference type="OrthoDB" id="9805215at2"/>
<dbReference type="Proteomes" id="UP000002014">
    <property type="component" value="Chromosome"/>
</dbReference>
<dbReference type="GO" id="GO:0005737">
    <property type="term" value="C:cytoplasm"/>
    <property type="evidence" value="ECO:0007669"/>
    <property type="project" value="UniProtKB-SubCell"/>
</dbReference>
<dbReference type="GO" id="GO:0051539">
    <property type="term" value="F:4 iron, 4 sulfur cluster binding"/>
    <property type="evidence" value="ECO:0007669"/>
    <property type="project" value="UniProtKB-UniRule"/>
</dbReference>
<dbReference type="GO" id="GO:0046872">
    <property type="term" value="F:metal ion binding"/>
    <property type="evidence" value="ECO:0007669"/>
    <property type="project" value="UniProtKB-KW"/>
</dbReference>
<dbReference type="GO" id="GO:0035596">
    <property type="term" value="F:methylthiotransferase activity"/>
    <property type="evidence" value="ECO:0007669"/>
    <property type="project" value="InterPro"/>
</dbReference>
<dbReference type="GO" id="GO:0035600">
    <property type="term" value="P:tRNA methylthiolation"/>
    <property type="evidence" value="ECO:0007669"/>
    <property type="project" value="TreeGrafter"/>
</dbReference>
<dbReference type="CDD" id="cd01335">
    <property type="entry name" value="Radical_SAM"/>
    <property type="match status" value="1"/>
</dbReference>
<dbReference type="FunFam" id="3.40.50.12160:FF:000006">
    <property type="entry name" value="tRNA-2-methylthio-N(6)-dimethylallyladenosine synthase"/>
    <property type="match status" value="1"/>
</dbReference>
<dbReference type="FunFam" id="3.80.30.20:FF:000001">
    <property type="entry name" value="tRNA-2-methylthio-N(6)-dimethylallyladenosine synthase 2"/>
    <property type="match status" value="1"/>
</dbReference>
<dbReference type="Gene3D" id="3.40.50.12160">
    <property type="entry name" value="Methylthiotransferase, N-terminal domain"/>
    <property type="match status" value="1"/>
</dbReference>
<dbReference type="Gene3D" id="3.80.30.20">
    <property type="entry name" value="tm_1862 like domain"/>
    <property type="match status" value="1"/>
</dbReference>
<dbReference type="HAMAP" id="MF_01864">
    <property type="entry name" value="tRNA_metthiotr_MiaB"/>
    <property type="match status" value="1"/>
</dbReference>
<dbReference type="InterPro" id="IPR006638">
    <property type="entry name" value="Elp3/MiaA/NifB-like_rSAM"/>
</dbReference>
<dbReference type="InterPro" id="IPR005839">
    <property type="entry name" value="Methylthiotransferase"/>
</dbReference>
<dbReference type="InterPro" id="IPR020612">
    <property type="entry name" value="Methylthiotransferase_CS"/>
</dbReference>
<dbReference type="InterPro" id="IPR013848">
    <property type="entry name" value="Methylthiotransferase_N"/>
</dbReference>
<dbReference type="InterPro" id="IPR038135">
    <property type="entry name" value="Methylthiotransferase_N_sf"/>
</dbReference>
<dbReference type="InterPro" id="IPR006463">
    <property type="entry name" value="MiaB_methiolase"/>
</dbReference>
<dbReference type="InterPro" id="IPR007197">
    <property type="entry name" value="rSAM"/>
</dbReference>
<dbReference type="InterPro" id="IPR023404">
    <property type="entry name" value="rSAM_horseshoe"/>
</dbReference>
<dbReference type="InterPro" id="IPR002792">
    <property type="entry name" value="TRAM_dom"/>
</dbReference>
<dbReference type="NCBIfam" id="TIGR01574">
    <property type="entry name" value="miaB-methiolase"/>
    <property type="match status" value="1"/>
</dbReference>
<dbReference type="NCBIfam" id="TIGR00089">
    <property type="entry name" value="MiaB/RimO family radical SAM methylthiotransferase"/>
    <property type="match status" value="1"/>
</dbReference>
<dbReference type="PANTHER" id="PTHR43020">
    <property type="entry name" value="CDK5 REGULATORY SUBUNIT-ASSOCIATED PROTEIN 1"/>
    <property type="match status" value="1"/>
</dbReference>
<dbReference type="PANTHER" id="PTHR43020:SF2">
    <property type="entry name" value="MITOCHONDRIAL TRNA METHYLTHIOTRANSFERASE CDK5RAP1"/>
    <property type="match status" value="1"/>
</dbReference>
<dbReference type="Pfam" id="PF04055">
    <property type="entry name" value="Radical_SAM"/>
    <property type="match status" value="1"/>
</dbReference>
<dbReference type="Pfam" id="PF01938">
    <property type="entry name" value="TRAM"/>
    <property type="match status" value="1"/>
</dbReference>
<dbReference type="Pfam" id="PF00919">
    <property type="entry name" value="UPF0004"/>
    <property type="match status" value="1"/>
</dbReference>
<dbReference type="SFLD" id="SFLDF00273">
    <property type="entry name" value="(dimethylallyl)adenosine_tRNA"/>
    <property type="match status" value="1"/>
</dbReference>
<dbReference type="SFLD" id="SFLDG01082">
    <property type="entry name" value="B12-binding_domain_containing"/>
    <property type="match status" value="1"/>
</dbReference>
<dbReference type="SFLD" id="SFLDG01061">
    <property type="entry name" value="methylthiotransferase"/>
    <property type="match status" value="1"/>
</dbReference>
<dbReference type="SMART" id="SM00729">
    <property type="entry name" value="Elp3"/>
    <property type="match status" value="1"/>
</dbReference>
<dbReference type="SUPFAM" id="SSF102114">
    <property type="entry name" value="Radical SAM enzymes"/>
    <property type="match status" value="1"/>
</dbReference>
<dbReference type="PROSITE" id="PS51449">
    <property type="entry name" value="MTTASE_N"/>
    <property type="match status" value="1"/>
</dbReference>
<dbReference type="PROSITE" id="PS01278">
    <property type="entry name" value="MTTASE_RADICAL"/>
    <property type="match status" value="1"/>
</dbReference>
<dbReference type="PROSITE" id="PS51918">
    <property type="entry name" value="RADICAL_SAM"/>
    <property type="match status" value="1"/>
</dbReference>
<dbReference type="PROSITE" id="PS50926">
    <property type="entry name" value="TRAM"/>
    <property type="match status" value="1"/>
</dbReference>
<keyword id="KW-0004">4Fe-4S</keyword>
<keyword id="KW-0963">Cytoplasm</keyword>
<keyword id="KW-0408">Iron</keyword>
<keyword id="KW-0411">Iron-sulfur</keyword>
<keyword id="KW-0479">Metal-binding</keyword>
<keyword id="KW-0949">S-adenosyl-L-methionine</keyword>
<keyword id="KW-0808">Transferase</keyword>
<keyword id="KW-0819">tRNA processing</keyword>
<organism>
    <name type="scientific">Prochlorococcus marinus (strain MIT 9215)</name>
    <dbReference type="NCBI Taxonomy" id="93060"/>
    <lineage>
        <taxon>Bacteria</taxon>
        <taxon>Bacillati</taxon>
        <taxon>Cyanobacteriota</taxon>
        <taxon>Cyanophyceae</taxon>
        <taxon>Synechococcales</taxon>
        <taxon>Prochlorococcaceae</taxon>
        <taxon>Prochlorococcus</taxon>
    </lineage>
</organism>
<reference key="1">
    <citation type="journal article" date="2007" name="PLoS Genet.">
        <title>Patterns and implications of gene gain and loss in the evolution of Prochlorococcus.</title>
        <authorList>
            <person name="Kettler G.C."/>
            <person name="Martiny A.C."/>
            <person name="Huang K."/>
            <person name="Zucker J."/>
            <person name="Coleman M.L."/>
            <person name="Rodrigue S."/>
            <person name="Chen F."/>
            <person name="Lapidus A."/>
            <person name="Ferriera S."/>
            <person name="Johnson J."/>
            <person name="Steglich C."/>
            <person name="Church G.M."/>
            <person name="Richardson P."/>
            <person name="Chisholm S.W."/>
        </authorList>
    </citation>
    <scope>NUCLEOTIDE SEQUENCE [LARGE SCALE GENOMIC DNA]</scope>
    <source>
        <strain>MIT 9215</strain>
    </source>
</reference>
<evidence type="ECO:0000255" key="1">
    <source>
        <dbReference type="HAMAP-Rule" id="MF_01864"/>
    </source>
</evidence>
<evidence type="ECO:0000255" key="2">
    <source>
        <dbReference type="PROSITE-ProRule" id="PRU01266"/>
    </source>
</evidence>
<feature type="chain" id="PRO_0000374446" description="tRNA-2-methylthio-N(6)-dimethylallyladenosine synthase">
    <location>
        <begin position="1"/>
        <end position="464"/>
    </location>
</feature>
<feature type="domain" description="MTTase N-terminal" evidence="1">
    <location>
        <begin position="19"/>
        <end position="135"/>
    </location>
</feature>
<feature type="domain" description="Radical SAM core" evidence="2">
    <location>
        <begin position="156"/>
        <end position="393"/>
    </location>
</feature>
<feature type="domain" description="TRAM" evidence="1">
    <location>
        <begin position="396"/>
        <end position="464"/>
    </location>
</feature>
<feature type="binding site" evidence="1">
    <location>
        <position position="28"/>
    </location>
    <ligand>
        <name>[4Fe-4S] cluster</name>
        <dbReference type="ChEBI" id="CHEBI:49883"/>
        <label>1</label>
    </ligand>
</feature>
<feature type="binding site" evidence="1">
    <location>
        <position position="64"/>
    </location>
    <ligand>
        <name>[4Fe-4S] cluster</name>
        <dbReference type="ChEBI" id="CHEBI:49883"/>
        <label>1</label>
    </ligand>
</feature>
<feature type="binding site" evidence="1">
    <location>
        <position position="98"/>
    </location>
    <ligand>
        <name>[4Fe-4S] cluster</name>
        <dbReference type="ChEBI" id="CHEBI:49883"/>
        <label>1</label>
    </ligand>
</feature>
<feature type="binding site" evidence="1">
    <location>
        <position position="170"/>
    </location>
    <ligand>
        <name>[4Fe-4S] cluster</name>
        <dbReference type="ChEBI" id="CHEBI:49883"/>
        <label>2</label>
        <note>4Fe-4S-S-AdoMet</note>
    </ligand>
</feature>
<feature type="binding site" evidence="1">
    <location>
        <position position="174"/>
    </location>
    <ligand>
        <name>[4Fe-4S] cluster</name>
        <dbReference type="ChEBI" id="CHEBI:49883"/>
        <label>2</label>
        <note>4Fe-4S-S-AdoMet</note>
    </ligand>
</feature>
<feature type="binding site" evidence="1">
    <location>
        <position position="177"/>
    </location>
    <ligand>
        <name>[4Fe-4S] cluster</name>
        <dbReference type="ChEBI" id="CHEBI:49883"/>
        <label>2</label>
        <note>4Fe-4S-S-AdoMet</note>
    </ligand>
</feature>
<comment type="function">
    <text evidence="1">Catalyzes the methylthiolation of N6-(dimethylallyl)adenosine (i(6)A), leading to the formation of 2-methylthio-N6-(dimethylallyl)adenosine (ms(2)i(6)A) at position 37 in tRNAs that read codons beginning with uridine.</text>
</comment>
<comment type="catalytic activity">
    <reaction evidence="1">
        <text>N(6)-dimethylallyladenosine(37) in tRNA + (sulfur carrier)-SH + AH2 + 2 S-adenosyl-L-methionine = 2-methylsulfanyl-N(6)-dimethylallyladenosine(37) in tRNA + (sulfur carrier)-H + 5'-deoxyadenosine + L-methionine + A + S-adenosyl-L-homocysteine + 2 H(+)</text>
        <dbReference type="Rhea" id="RHEA:37067"/>
        <dbReference type="Rhea" id="RHEA-COMP:10375"/>
        <dbReference type="Rhea" id="RHEA-COMP:10376"/>
        <dbReference type="Rhea" id="RHEA-COMP:14737"/>
        <dbReference type="Rhea" id="RHEA-COMP:14739"/>
        <dbReference type="ChEBI" id="CHEBI:13193"/>
        <dbReference type="ChEBI" id="CHEBI:15378"/>
        <dbReference type="ChEBI" id="CHEBI:17319"/>
        <dbReference type="ChEBI" id="CHEBI:17499"/>
        <dbReference type="ChEBI" id="CHEBI:29917"/>
        <dbReference type="ChEBI" id="CHEBI:57844"/>
        <dbReference type="ChEBI" id="CHEBI:57856"/>
        <dbReference type="ChEBI" id="CHEBI:59789"/>
        <dbReference type="ChEBI" id="CHEBI:64428"/>
        <dbReference type="ChEBI" id="CHEBI:74415"/>
        <dbReference type="ChEBI" id="CHEBI:74417"/>
        <dbReference type="EC" id="2.8.4.3"/>
    </reaction>
</comment>
<comment type="cofactor">
    <cofactor evidence="1">
        <name>[4Fe-4S] cluster</name>
        <dbReference type="ChEBI" id="CHEBI:49883"/>
    </cofactor>
    <text evidence="1">Binds 2 [4Fe-4S] clusters. One cluster is coordinated with 3 cysteines and an exchangeable S-adenosyl-L-methionine.</text>
</comment>
<comment type="subunit">
    <text evidence="1">Monomer.</text>
</comment>
<comment type="subcellular location">
    <subcellularLocation>
        <location evidence="1">Cytoplasm</location>
    </subcellularLocation>
</comment>
<comment type="similarity">
    <text evidence="1">Belongs to the methylthiotransferase family. MiaB subfamily.</text>
</comment>
<gene>
    <name evidence="1" type="primary">miaB</name>
    <name type="ordered locus">P9215_15341</name>
</gene>
<sequence length="464" mass="52967">MLTKTIKDQNKFQKDSTIGSYWITTFGCQMNKADSERMAGTLEKMGYTRADDELKADLVLYNTCTIRDNAEQKVYSFLGRQAKRKHKIPSLKLVVAGCLAQQEGESLLRRVPELDLVMGPQHVNNLENLLGKVDLGNQVAATEETFISEDITNARRESSICGWVNIIYGCNERCSYCVVPSVRGKEQSRYPDAIKSEIQKLANDNFKEITLLGQNIDAYGRDLPGTTKEGRKENTLTDLLYYIHDVEGIRRIRFATSHPRYFSRRLIQACYELDKVCEHFHIPFQSGNNEILKLMARGYTIDKYKRIIENIRSLMPNASITADAIVAFPGESEEQYRDTLKLISDIGFDQVMTAAYSPRPNTPAALWHNQISEEVKKERLKEINELVETTSKQRNERYLDSIESVLIEGFNPKNSSQIMGRTRTNRLTFVEIPKNIKFNFSLGDEIDVKINEARPFSLTGILCL</sequence>
<accession>A8G6B6</accession>
<proteinExistence type="inferred from homology"/>
<protein>
    <recommendedName>
        <fullName evidence="1">tRNA-2-methylthio-N(6)-dimethylallyladenosine synthase</fullName>
        <ecNumber evidence="1">2.8.4.3</ecNumber>
    </recommendedName>
    <alternativeName>
        <fullName evidence="1">(Dimethylallyl)adenosine tRNA methylthiotransferase MiaB</fullName>
    </alternativeName>
    <alternativeName>
        <fullName evidence="1">tRNA-i(6)A37 methylthiotransferase</fullName>
    </alternativeName>
</protein>